<proteinExistence type="evidence at transcript level"/>
<reference key="1">
    <citation type="journal article" date="1993" name="Plant Mol. Biol.">
        <title>Plant aldolase: cDNA and deduced amino-acid sequences of the chloroplast and cytosol enzyme from spinach.</title>
        <authorList>
            <person name="Pelzer-Reith B."/>
            <person name="Penger A."/>
            <person name="Schnarrenberger C."/>
        </authorList>
    </citation>
    <scope>NUCLEOTIDE SEQUENCE [MRNA]</scope>
    <source>
        <tissue>Leaf</tissue>
    </source>
</reference>
<organism>
    <name type="scientific">Spinacia oleracea</name>
    <name type="common">Spinach</name>
    <dbReference type="NCBI Taxonomy" id="3562"/>
    <lineage>
        <taxon>Eukaryota</taxon>
        <taxon>Viridiplantae</taxon>
        <taxon>Streptophyta</taxon>
        <taxon>Embryophyta</taxon>
        <taxon>Tracheophyta</taxon>
        <taxon>Spermatophyta</taxon>
        <taxon>Magnoliopsida</taxon>
        <taxon>eudicotyledons</taxon>
        <taxon>Gunneridae</taxon>
        <taxon>Pentapetalae</taxon>
        <taxon>Caryophyllales</taxon>
        <taxon>Chenopodiaceae</taxon>
        <taxon>Chenopodioideae</taxon>
        <taxon>Anserineae</taxon>
        <taxon>Spinacia</taxon>
    </lineage>
</organism>
<keyword id="KW-0963">Cytoplasm</keyword>
<keyword id="KW-0324">Glycolysis</keyword>
<keyword id="KW-0456">Lyase</keyword>
<keyword id="KW-1185">Reference proteome</keyword>
<keyword id="KW-0704">Schiff base</keyword>
<accession>P29356</accession>
<dbReference type="EC" id="4.1.2.13"/>
<dbReference type="EMBL" id="X65742">
    <property type="protein sequence ID" value="CAA46649.1"/>
    <property type="molecule type" value="mRNA"/>
</dbReference>
<dbReference type="PIR" id="S31091">
    <property type="entry name" value="ADSPAC"/>
</dbReference>
<dbReference type="SMR" id="P29356"/>
<dbReference type="BioCyc" id="MetaCyc:MONOMER-12898"/>
<dbReference type="SABIO-RK" id="P29356"/>
<dbReference type="UniPathway" id="UPA00109">
    <property type="reaction ID" value="UER00183"/>
</dbReference>
<dbReference type="Proteomes" id="UP001155700">
    <property type="component" value="Unplaced"/>
</dbReference>
<dbReference type="GO" id="GO:0005829">
    <property type="term" value="C:cytosol"/>
    <property type="evidence" value="ECO:0000314"/>
    <property type="project" value="AgBase"/>
</dbReference>
<dbReference type="GO" id="GO:0032991">
    <property type="term" value="C:protein-containing complex"/>
    <property type="evidence" value="ECO:0000314"/>
    <property type="project" value="AgBase"/>
</dbReference>
<dbReference type="GO" id="GO:0004332">
    <property type="term" value="F:fructose-bisphosphate aldolase activity"/>
    <property type="evidence" value="ECO:0000314"/>
    <property type="project" value="AgBase"/>
</dbReference>
<dbReference type="GO" id="GO:0030388">
    <property type="term" value="P:fructose 1,6-bisphosphate metabolic process"/>
    <property type="evidence" value="ECO:0000318"/>
    <property type="project" value="GO_Central"/>
</dbReference>
<dbReference type="GO" id="GO:0006096">
    <property type="term" value="P:glycolytic process"/>
    <property type="evidence" value="ECO:0000318"/>
    <property type="project" value="GO_Central"/>
</dbReference>
<dbReference type="CDD" id="cd00948">
    <property type="entry name" value="FBP_aldolase_I_a"/>
    <property type="match status" value="1"/>
</dbReference>
<dbReference type="FunFam" id="3.20.20.70:FF:000068">
    <property type="entry name" value="Fructose-bisphosphate aldolase"/>
    <property type="match status" value="1"/>
</dbReference>
<dbReference type="Gene3D" id="3.20.20.70">
    <property type="entry name" value="Aldolase class I"/>
    <property type="match status" value="1"/>
</dbReference>
<dbReference type="InterPro" id="IPR029768">
    <property type="entry name" value="Aldolase_I_AS"/>
</dbReference>
<dbReference type="InterPro" id="IPR013785">
    <property type="entry name" value="Aldolase_TIM"/>
</dbReference>
<dbReference type="InterPro" id="IPR000741">
    <property type="entry name" value="FBA_I"/>
</dbReference>
<dbReference type="NCBIfam" id="NF033379">
    <property type="entry name" value="FrucBisAld_I"/>
    <property type="match status" value="1"/>
</dbReference>
<dbReference type="PANTHER" id="PTHR11627">
    <property type="entry name" value="FRUCTOSE-BISPHOSPHATE ALDOLASE"/>
    <property type="match status" value="1"/>
</dbReference>
<dbReference type="Pfam" id="PF00274">
    <property type="entry name" value="Glycolytic"/>
    <property type="match status" value="1"/>
</dbReference>
<dbReference type="SUPFAM" id="SSF51569">
    <property type="entry name" value="Aldolase"/>
    <property type="match status" value="1"/>
</dbReference>
<dbReference type="PROSITE" id="PS00158">
    <property type="entry name" value="ALDOLASE_CLASS_I"/>
    <property type="match status" value="1"/>
</dbReference>
<protein>
    <recommendedName>
        <fullName>Fructose-bisphosphate aldolase, cytoplasmic isozyme</fullName>
        <ecNumber>4.1.2.13</ecNumber>
    </recommendedName>
</protein>
<sequence>MTAYRGKYADELIANASYIATPGKVILAADESTGTIGKRFPSINVENVESNRRALRELLFTTPGALPYLSGVILFEETLYQKTADGKPFVDAMKDGGVLPGIKVDKGTVELAGTNGETTTQGLDGLAQRCAQYYTAGARFAKWRAVLKIGPTEPSPLAILENANGLARYGIICQENGLVPIVEPEILVDGTHDIDRCAEVSERVLAACYKALNDHHVLLEGTSLKPNIVTPGSESKKVTPEVIAEYTVRTLQRTVPQAVPGVMFLSGGQSEEEATLNLNAMNKLETKKPWTLSFSYGRALQQSTLKAWQGKEENVAKAQEVFLARAKGNSEATLGKYQGGAGGADASESLHVKDYKY</sequence>
<name>ALF_SPIOL</name>
<feature type="chain" id="PRO_0000216925" description="Fructose-bisphosphate aldolase, cytoplasmic isozyme">
    <location>
        <begin position="1"/>
        <end position="357"/>
    </location>
</feature>
<feature type="active site" description="Proton acceptor" evidence="1">
    <location>
        <position position="183"/>
    </location>
</feature>
<feature type="active site" description="Schiff-base intermediate with dihydroxyacetone-P" evidence="1">
    <location>
        <position position="225"/>
    </location>
</feature>
<feature type="binding site" evidence="1">
    <location>
        <position position="53"/>
    </location>
    <ligand>
        <name>substrate</name>
    </ligand>
</feature>
<feature type="binding site" evidence="1">
    <location>
        <position position="142"/>
    </location>
    <ligand>
        <name>substrate</name>
    </ligand>
</feature>
<feature type="site" description="Necessary for preference for fructose 1,6-bisphosphate over fructose 1-phosphate" evidence="1">
    <location>
        <position position="357"/>
    </location>
</feature>
<comment type="catalytic activity">
    <reaction>
        <text>beta-D-fructose 1,6-bisphosphate = D-glyceraldehyde 3-phosphate + dihydroxyacetone phosphate</text>
        <dbReference type="Rhea" id="RHEA:14729"/>
        <dbReference type="ChEBI" id="CHEBI:32966"/>
        <dbReference type="ChEBI" id="CHEBI:57642"/>
        <dbReference type="ChEBI" id="CHEBI:59776"/>
        <dbReference type="EC" id="4.1.2.13"/>
    </reaction>
</comment>
<comment type="pathway">
    <text>Carbohydrate degradation; glycolysis; D-glyceraldehyde 3-phosphate and glycerone phosphate from D-glucose: step 4/4.</text>
</comment>
<comment type="subcellular location">
    <subcellularLocation>
        <location>Cytoplasm</location>
    </subcellularLocation>
</comment>
<comment type="similarity">
    <text evidence="2">Belongs to the class I fructose-bisphosphate aldolase family.</text>
</comment>
<evidence type="ECO:0000250" key="1"/>
<evidence type="ECO:0000305" key="2"/>